<evidence type="ECO:0000250" key="1">
    <source>
        <dbReference type="UniProtKB" id="P9WIC1"/>
    </source>
</evidence>
<evidence type="ECO:0000255" key="2">
    <source>
        <dbReference type="PROSITE-ProRule" id="PRU00515"/>
    </source>
</evidence>
<evidence type="ECO:0000305" key="3"/>
<organism>
    <name type="scientific">Mycobacterium tuberculosis (strain CDC 1551 / Oshkosh)</name>
    <dbReference type="NCBI Taxonomy" id="83331"/>
    <lineage>
        <taxon>Bacteria</taxon>
        <taxon>Bacillati</taxon>
        <taxon>Actinomycetota</taxon>
        <taxon>Actinomycetes</taxon>
        <taxon>Mycobacteriales</taxon>
        <taxon>Mycobacteriaceae</taxon>
        <taxon>Mycobacterium</taxon>
        <taxon>Mycobacterium tuberculosis complex</taxon>
    </lineage>
</organism>
<reference key="1">
    <citation type="journal article" date="2002" name="J. Bacteriol.">
        <title>Whole-genome comparison of Mycobacterium tuberculosis clinical and laboratory strains.</title>
        <authorList>
            <person name="Fleischmann R.D."/>
            <person name="Alland D."/>
            <person name="Eisen J.A."/>
            <person name="Carpenter L."/>
            <person name="White O."/>
            <person name="Peterson J.D."/>
            <person name="DeBoy R.T."/>
            <person name="Dodson R.J."/>
            <person name="Gwinn M.L."/>
            <person name="Haft D.H."/>
            <person name="Hickey E.K."/>
            <person name="Kolonay J.F."/>
            <person name="Nelson W.C."/>
            <person name="Umayam L.A."/>
            <person name="Ermolaeva M.D."/>
            <person name="Salzberg S.L."/>
            <person name="Delcher A."/>
            <person name="Utterback T.R."/>
            <person name="Weidman J.F."/>
            <person name="Khouri H.M."/>
            <person name="Gill J."/>
            <person name="Mikula A."/>
            <person name="Bishai W."/>
            <person name="Jacobs W.R. Jr."/>
            <person name="Venter J.C."/>
            <person name="Fraser C.M."/>
        </authorList>
    </citation>
    <scope>NUCLEOTIDE SEQUENCE [LARGE SCALE GENOMIC DNA]</scope>
    <source>
        <strain>CDC 1551 / Oshkosh</strain>
    </source>
</reference>
<accession>P9WIC0</accession>
<accession>L0T5D6</accession>
<accession>P64767</accession>
<accession>P71562</accession>
<dbReference type="EC" id="5.4.99.5" evidence="1"/>
<dbReference type="EMBL" id="AE000516">
    <property type="protein sequence ID" value="AAK45223.1"/>
    <property type="status" value="ALT_INIT"/>
    <property type="molecule type" value="Genomic_DNA"/>
</dbReference>
<dbReference type="PIR" id="B70716">
    <property type="entry name" value="B70716"/>
</dbReference>
<dbReference type="RefSeq" id="WP_003404838.1">
    <property type="nucleotide sequence ID" value="NZ_KK341227.1"/>
</dbReference>
<dbReference type="SMR" id="P9WIC0"/>
<dbReference type="KEGG" id="mtc:MT0975"/>
<dbReference type="PATRIC" id="fig|83331.31.peg.1046"/>
<dbReference type="HOGENOM" id="CLU_1271163_0_0_11"/>
<dbReference type="UniPathway" id="UPA00120">
    <property type="reaction ID" value="UER00203"/>
</dbReference>
<dbReference type="Proteomes" id="UP000001020">
    <property type="component" value="Chromosome"/>
</dbReference>
<dbReference type="GO" id="GO:0005737">
    <property type="term" value="C:cytoplasm"/>
    <property type="evidence" value="ECO:0007669"/>
    <property type="project" value="UniProtKB-SubCell"/>
</dbReference>
<dbReference type="GO" id="GO:0004106">
    <property type="term" value="F:chorismate mutase activity"/>
    <property type="evidence" value="ECO:0007669"/>
    <property type="project" value="UniProtKB-EC"/>
</dbReference>
<dbReference type="GO" id="GO:0008652">
    <property type="term" value="P:amino acid biosynthetic process"/>
    <property type="evidence" value="ECO:0007669"/>
    <property type="project" value="UniProtKB-KW"/>
</dbReference>
<dbReference type="GO" id="GO:0009073">
    <property type="term" value="P:aromatic amino acid family biosynthetic process"/>
    <property type="evidence" value="ECO:0007669"/>
    <property type="project" value="UniProtKB-KW"/>
</dbReference>
<dbReference type="GO" id="GO:0046417">
    <property type="term" value="P:chorismate metabolic process"/>
    <property type="evidence" value="ECO:0007669"/>
    <property type="project" value="InterPro"/>
</dbReference>
<dbReference type="GO" id="GO:0009697">
    <property type="term" value="P:salicylic acid biosynthetic process"/>
    <property type="evidence" value="ECO:0007669"/>
    <property type="project" value="TreeGrafter"/>
</dbReference>
<dbReference type="FunFam" id="1.20.59.10:FF:000009">
    <property type="entry name" value="Intracellular chorismate mutase"/>
    <property type="match status" value="1"/>
</dbReference>
<dbReference type="Gene3D" id="1.20.59.10">
    <property type="entry name" value="Chorismate mutase"/>
    <property type="match status" value="1"/>
</dbReference>
<dbReference type="InterPro" id="IPR036263">
    <property type="entry name" value="Chorismate_II_sf"/>
</dbReference>
<dbReference type="InterPro" id="IPR051331">
    <property type="entry name" value="Chorismate_mutase-related"/>
</dbReference>
<dbReference type="InterPro" id="IPR010958">
    <property type="entry name" value="Chorismate_mutase_highGC-bac"/>
</dbReference>
<dbReference type="InterPro" id="IPR036979">
    <property type="entry name" value="CM_dom_sf"/>
</dbReference>
<dbReference type="InterPro" id="IPR002701">
    <property type="entry name" value="CM_II_prokaryot"/>
</dbReference>
<dbReference type="NCBIfam" id="TIGR01808">
    <property type="entry name" value="CM_M_hiGC-arch"/>
    <property type="match status" value="1"/>
</dbReference>
<dbReference type="NCBIfam" id="NF005894">
    <property type="entry name" value="PRK07857.1"/>
    <property type="match status" value="1"/>
</dbReference>
<dbReference type="PANTHER" id="PTHR38041">
    <property type="entry name" value="CHORISMATE MUTASE"/>
    <property type="match status" value="1"/>
</dbReference>
<dbReference type="PANTHER" id="PTHR38041:SF1">
    <property type="entry name" value="CHORISMATE MUTASE"/>
    <property type="match status" value="1"/>
</dbReference>
<dbReference type="Pfam" id="PF01817">
    <property type="entry name" value="CM_2"/>
    <property type="match status" value="1"/>
</dbReference>
<dbReference type="SMART" id="SM00830">
    <property type="entry name" value="CM_2"/>
    <property type="match status" value="1"/>
</dbReference>
<dbReference type="SUPFAM" id="SSF48600">
    <property type="entry name" value="Chorismate mutase II"/>
    <property type="match status" value="1"/>
</dbReference>
<dbReference type="PROSITE" id="PS51168">
    <property type="entry name" value="CHORISMATE_MUT_2"/>
    <property type="match status" value="1"/>
</dbReference>
<protein>
    <recommendedName>
        <fullName evidence="1">Intracellular chorismate mutase</fullName>
        <shortName evidence="1">CM</shortName>
        <ecNumber evidence="1">5.4.99.5</ecNumber>
    </recommendedName>
</protein>
<sequence>MRPEPPHHENAELAAMNLEMLESQPVPEIDTLREEIDRLDAEILALVKRRAEVSKAIGKARMASGGTRLVHSREMKVIERYSELGPDGKDLAILLLRLGRGRLGH</sequence>
<proteinExistence type="inferred from homology"/>
<name>CHMU_MYCTO</name>
<feature type="chain" id="PRO_0000428033" description="Intracellular chorismate mutase">
    <location>
        <begin position="1"/>
        <end position="105"/>
    </location>
</feature>
<feature type="domain" description="Chorismate mutase" evidence="2">
    <location>
        <begin position="23"/>
        <end position="105"/>
    </location>
</feature>
<feature type="binding site" evidence="1">
    <location>
        <position position="61"/>
    </location>
    <ligand>
        <name>chorismate</name>
        <dbReference type="ChEBI" id="CHEBI:29748"/>
    </ligand>
</feature>
<feature type="binding site" evidence="1">
    <location>
        <position position="70"/>
    </location>
    <ligand>
        <name>chorismate</name>
        <dbReference type="ChEBI" id="CHEBI:29748"/>
    </ligand>
</feature>
<feature type="binding site" evidence="1">
    <location>
        <position position="74"/>
    </location>
    <ligand>
        <name>chorismate</name>
        <dbReference type="ChEBI" id="CHEBI:29748"/>
    </ligand>
</feature>
<feature type="site" description="Important for catalysis" evidence="1">
    <location>
        <position position="61"/>
    </location>
</feature>
<feature type="site" description="Important for activation via AroG" evidence="1">
    <location>
        <position position="101"/>
    </location>
</feature>
<feature type="site" description="Important for activation via AroG" evidence="1">
    <location>
        <position position="102"/>
    </location>
</feature>
<feature type="site" description="Important for activation via AroG" evidence="1">
    <location>
        <position position="103"/>
    </location>
</feature>
<gene>
    <name type="ordered locus">MT0975</name>
</gene>
<keyword id="KW-0028">Amino-acid biosynthesis</keyword>
<keyword id="KW-0057">Aromatic amino acid biosynthesis</keyword>
<keyword id="KW-0963">Cytoplasm</keyword>
<keyword id="KW-0413">Isomerase</keyword>
<keyword id="KW-1185">Reference proteome</keyword>
<comment type="function">
    <text evidence="1">Catalyzes the Claisen rearrangement of chorismate to prephenate. Probably involved in the aromatic amino acid biosynthesis.</text>
</comment>
<comment type="catalytic activity">
    <reaction evidence="1">
        <text>chorismate = prephenate</text>
        <dbReference type="Rhea" id="RHEA:13897"/>
        <dbReference type="ChEBI" id="CHEBI:29748"/>
        <dbReference type="ChEBI" id="CHEBI:29934"/>
        <dbReference type="EC" id="5.4.99.5"/>
    </reaction>
</comment>
<comment type="activity regulation">
    <text evidence="1">The formation of the complex with AroG activates the chorismate mutase activity.</text>
</comment>
<comment type="pathway">
    <text evidence="1">Metabolic intermediate biosynthesis; prephenate biosynthesis; prephenate from chorismate: step 1/1.</text>
</comment>
<comment type="subunit">
    <text evidence="1">Homodimer. Interacts with AroG.</text>
</comment>
<comment type="subcellular location">
    <subcellularLocation>
        <location evidence="1">Cytoplasm</location>
    </subcellularLocation>
</comment>
<comment type="sequence caution" evidence="3">
    <conflict type="erroneous initiation">
        <sequence resource="EMBL-CDS" id="AAK45223"/>
    </conflict>
    <text>Extended N-terminus.</text>
</comment>